<name>CCYL1_XENTR</name>
<dbReference type="EMBL" id="CR848188">
    <property type="protein sequence ID" value="CAJ83491.1"/>
    <property type="molecule type" value="mRNA"/>
</dbReference>
<dbReference type="RefSeq" id="NP_001016919.1">
    <property type="nucleotide sequence ID" value="NM_001016919.2"/>
</dbReference>
<dbReference type="SMR" id="Q28EL0"/>
<dbReference type="FunCoup" id="Q28EL0">
    <property type="interactions" value="1199"/>
</dbReference>
<dbReference type="STRING" id="8364.ENSXETP00000029516"/>
<dbReference type="PaxDb" id="8364-ENSXETP00000035769"/>
<dbReference type="GeneID" id="549673"/>
<dbReference type="KEGG" id="xtr:549673"/>
<dbReference type="AGR" id="Xenbase:XB-GENE-5957672"/>
<dbReference type="CTD" id="151195"/>
<dbReference type="Xenbase" id="XB-GENE-5957672">
    <property type="gene designation" value="ccnyl1"/>
</dbReference>
<dbReference type="eggNOG" id="KOG1675">
    <property type="taxonomic scope" value="Eukaryota"/>
</dbReference>
<dbReference type="InParanoid" id="Q28EL0"/>
<dbReference type="OMA" id="RWADAYQ"/>
<dbReference type="OrthoDB" id="10250320at2759"/>
<dbReference type="Proteomes" id="UP000008143">
    <property type="component" value="Chromosome 9"/>
</dbReference>
<dbReference type="Bgee" id="ENSXETG00000016385">
    <property type="expression patterns" value="Expressed in 4-cell stage embryo and 16 other cell types or tissues"/>
</dbReference>
<dbReference type="ExpressionAtlas" id="Q28EL0">
    <property type="expression patterns" value="baseline"/>
</dbReference>
<dbReference type="GO" id="GO:0005886">
    <property type="term" value="C:plasma membrane"/>
    <property type="evidence" value="ECO:0000250"/>
    <property type="project" value="UniProtKB"/>
</dbReference>
<dbReference type="GO" id="GO:0019901">
    <property type="term" value="F:protein kinase binding"/>
    <property type="evidence" value="ECO:0007669"/>
    <property type="project" value="InterPro"/>
</dbReference>
<dbReference type="GO" id="GO:0007399">
    <property type="term" value="P:nervous system development"/>
    <property type="evidence" value="ECO:0007669"/>
    <property type="project" value="UniProtKB-KW"/>
</dbReference>
<dbReference type="CDD" id="cd20540">
    <property type="entry name" value="CYCLIN_CCNY_like"/>
    <property type="match status" value="1"/>
</dbReference>
<dbReference type="FunFam" id="1.10.472.10:FF:000011">
    <property type="entry name" value="Cyclin-Y isoform 1"/>
    <property type="match status" value="1"/>
</dbReference>
<dbReference type="Gene3D" id="1.10.472.10">
    <property type="entry name" value="Cyclin-like"/>
    <property type="match status" value="1"/>
</dbReference>
<dbReference type="InterPro" id="IPR013763">
    <property type="entry name" value="Cyclin-like_dom"/>
</dbReference>
<dbReference type="InterPro" id="IPR036915">
    <property type="entry name" value="Cyclin-like_sf"/>
</dbReference>
<dbReference type="InterPro" id="IPR006671">
    <property type="entry name" value="Cyclin_N"/>
</dbReference>
<dbReference type="InterPro" id="IPR012399">
    <property type="entry name" value="Cyclin_Y"/>
</dbReference>
<dbReference type="PANTHER" id="PTHR14248">
    <property type="entry name" value="CYCLIN Y, ISOFORM A"/>
    <property type="match status" value="1"/>
</dbReference>
<dbReference type="Pfam" id="PF00134">
    <property type="entry name" value="Cyclin_N"/>
    <property type="match status" value="1"/>
</dbReference>
<dbReference type="PIRSF" id="PIRSF028934">
    <property type="entry name" value="Cyclin_CG14939"/>
    <property type="match status" value="1"/>
</dbReference>
<dbReference type="SMART" id="SM00385">
    <property type="entry name" value="CYCLIN"/>
    <property type="match status" value="1"/>
</dbReference>
<dbReference type="SUPFAM" id="SSF47954">
    <property type="entry name" value="Cyclin-like"/>
    <property type="match status" value="1"/>
</dbReference>
<accession>Q28EL0</accession>
<comment type="function">
    <text evidence="1">Key regulator of Wnt signaling implicated in various biological processes, such as embryonic neurogenesis.</text>
</comment>
<comment type="subcellular location">
    <subcellularLocation>
        <location evidence="2">Cell membrane</location>
    </subcellularLocation>
</comment>
<comment type="similarity">
    <text evidence="4">Belongs to the cyclin family. Cyclin Y subfamily.</text>
</comment>
<proteinExistence type="evidence at transcript level"/>
<feature type="chain" id="PRO_0000309325" description="Cyclin-Y-like protein 1">
    <location>
        <begin position="1"/>
        <end position="343"/>
    </location>
</feature>
<feature type="domain" description="Cyclin N-terminal">
    <location>
        <begin position="145"/>
        <end position="267"/>
    </location>
</feature>
<feature type="region of interest" description="Disordered" evidence="3">
    <location>
        <begin position="1"/>
        <end position="48"/>
    </location>
</feature>
<feature type="compositionally biased region" description="Basic and acidic residues" evidence="3">
    <location>
        <begin position="17"/>
        <end position="28"/>
    </location>
</feature>
<keyword id="KW-1003">Cell membrane</keyword>
<keyword id="KW-0195">Cyclin</keyword>
<keyword id="KW-0472">Membrane</keyword>
<keyword id="KW-0524">Neurogenesis</keyword>
<keyword id="KW-1185">Reference proteome</keyword>
<protein>
    <recommendedName>
        <fullName>Cyclin-Y-like protein 1</fullName>
    </recommendedName>
</protein>
<reference key="1">
    <citation type="submission" date="2006-10" db="EMBL/GenBank/DDBJ databases">
        <authorList>
            <consortium name="Sanger Xenopus tropicalis EST/cDNA project"/>
        </authorList>
    </citation>
    <scope>NUCLEOTIDE SEQUENCE [LARGE SCALE MRNA]</scope>
    <source>
        <tissue>Gastrula</tissue>
    </source>
</reference>
<sequence>MGNTVTCCVSPDASPKAGRDRAVTERGEPYQAQVELQETDPGPHLQHISDREFPVDFHDEPNPSDHPQASTIFLSKSQTDVREKRKSNHINHVSPGQLTKKYSSCSTIFLDDSTVSQPNLRSTIKCVTLAIYYHIKNRDSDRSLEIFDEKLHPLTREEVADDYCKHDPDHKHIYRFVRTLFSAAQLTAECAIVTLVYLERLLTYAEIDICPSNWKRIVLGAILLASKVWDDQAVWNVDYCQILKDITVEDMNEMERHFLELLQFNINVPASVYAKYYFDLRSLADDNNLSFLLEPLSKERAQKLEAISRLCEDKYKDLSKAAMRRSISADNLVGIRRSNAIIS</sequence>
<organism>
    <name type="scientific">Xenopus tropicalis</name>
    <name type="common">Western clawed frog</name>
    <name type="synonym">Silurana tropicalis</name>
    <dbReference type="NCBI Taxonomy" id="8364"/>
    <lineage>
        <taxon>Eukaryota</taxon>
        <taxon>Metazoa</taxon>
        <taxon>Chordata</taxon>
        <taxon>Craniata</taxon>
        <taxon>Vertebrata</taxon>
        <taxon>Euteleostomi</taxon>
        <taxon>Amphibia</taxon>
        <taxon>Batrachia</taxon>
        <taxon>Anura</taxon>
        <taxon>Pipoidea</taxon>
        <taxon>Pipidae</taxon>
        <taxon>Xenopodinae</taxon>
        <taxon>Xenopus</taxon>
        <taxon>Silurana</taxon>
    </lineage>
</organism>
<gene>
    <name type="primary">ccnyl1</name>
    <name type="ORF">TGas141j24.1</name>
</gene>
<evidence type="ECO:0000250" key="1">
    <source>
        <dbReference type="UniProtKB" id="D3YUJ3"/>
    </source>
</evidence>
<evidence type="ECO:0000250" key="2">
    <source>
        <dbReference type="UniProtKB" id="Q8N7R7"/>
    </source>
</evidence>
<evidence type="ECO:0000256" key="3">
    <source>
        <dbReference type="SAM" id="MobiDB-lite"/>
    </source>
</evidence>
<evidence type="ECO:0000305" key="4"/>